<gene>
    <name type="primary">spoIIAA</name>
</gene>
<protein>
    <recommendedName>
        <fullName>Anti-sigma F factor antagonist</fullName>
    </recommendedName>
    <alternativeName>
        <fullName>Stage II sporulation protein AA</fullName>
    </alternativeName>
</protein>
<sequence length="116" mass="12958">MSLSIELEFKQDVLLVRLTGELDHHTAEELRSKITEAIEKESISHLILNLQHLTFMDSSGLGVILGRYKQVHNNGGEMVVCAISPAIERLFNMSGLFKIIRFEPNEANALQKLGVA</sequence>
<dbReference type="EMBL" id="X63757">
    <property type="protein sequence ID" value="CAA45286.1"/>
    <property type="molecule type" value="Genomic_DNA"/>
</dbReference>
<dbReference type="PIR" id="A48402">
    <property type="entry name" value="A48402"/>
</dbReference>
<dbReference type="SMR" id="P35147"/>
<dbReference type="GO" id="GO:0043856">
    <property type="term" value="F:anti-sigma factor antagonist activity"/>
    <property type="evidence" value="ECO:0007669"/>
    <property type="project" value="InterPro"/>
</dbReference>
<dbReference type="GO" id="GO:0045152">
    <property type="term" value="F:antisigma factor binding"/>
    <property type="evidence" value="ECO:0007669"/>
    <property type="project" value="InterPro"/>
</dbReference>
<dbReference type="GO" id="GO:0030435">
    <property type="term" value="P:sporulation resulting in formation of a cellular spore"/>
    <property type="evidence" value="ECO:0007669"/>
    <property type="project" value="UniProtKB-KW"/>
</dbReference>
<dbReference type="Gene3D" id="3.30.750.24">
    <property type="entry name" value="STAS domain"/>
    <property type="match status" value="1"/>
</dbReference>
<dbReference type="InterPro" id="IPR003658">
    <property type="entry name" value="Anti-sigma_ant"/>
</dbReference>
<dbReference type="InterPro" id="IPR014237">
    <property type="entry name" value="Anti-sigma_F_ant"/>
</dbReference>
<dbReference type="InterPro" id="IPR002645">
    <property type="entry name" value="STAS_dom"/>
</dbReference>
<dbReference type="InterPro" id="IPR036513">
    <property type="entry name" value="STAS_dom_sf"/>
</dbReference>
<dbReference type="NCBIfam" id="TIGR00377">
    <property type="entry name" value="ant_ant_sig"/>
    <property type="match status" value="1"/>
</dbReference>
<dbReference type="NCBIfam" id="TIGR02886">
    <property type="entry name" value="spore_II_AA"/>
    <property type="match status" value="1"/>
</dbReference>
<dbReference type="PANTHER" id="PTHR33495:SF2">
    <property type="entry name" value="ANTI-SIGMA FACTOR ANTAGONIST TM_1081-RELATED"/>
    <property type="match status" value="1"/>
</dbReference>
<dbReference type="PANTHER" id="PTHR33495">
    <property type="entry name" value="ANTI-SIGMA FACTOR ANTAGONIST TM_1081-RELATED-RELATED"/>
    <property type="match status" value="1"/>
</dbReference>
<dbReference type="Pfam" id="PF01740">
    <property type="entry name" value="STAS"/>
    <property type="match status" value="1"/>
</dbReference>
<dbReference type="SUPFAM" id="SSF52091">
    <property type="entry name" value="SpoIIaa-like"/>
    <property type="match status" value="1"/>
</dbReference>
<dbReference type="PROSITE" id="PS50801">
    <property type="entry name" value="STAS"/>
    <property type="match status" value="1"/>
</dbReference>
<feature type="chain" id="PRO_0000194201" description="Anti-sigma F factor antagonist">
    <location>
        <begin position="1"/>
        <end position="116"/>
    </location>
</feature>
<feature type="domain" description="STAS" evidence="2">
    <location>
        <begin position="3"/>
        <end position="113"/>
    </location>
</feature>
<feature type="modified residue" description="Phosphoserine" evidence="1">
    <location>
        <position position="58"/>
    </location>
</feature>
<comment type="function">
    <text evidence="1">In the phosphorylated form it could act as an anti-anti-sigma factor that counteracts SpoIIAB and thus releases sigma f from inhibition.</text>
</comment>
<comment type="PTM">
    <text>Phosphorylated by SpoIIAB on a serine residue.</text>
</comment>
<comment type="similarity">
    <text evidence="3">Belongs to the anti-sigma-factor antagonist family.</text>
</comment>
<evidence type="ECO:0000250" key="1"/>
<evidence type="ECO:0000255" key="2">
    <source>
        <dbReference type="PROSITE-ProRule" id="PRU00198"/>
    </source>
</evidence>
<evidence type="ECO:0000305" key="3"/>
<accession>P35147</accession>
<organism>
    <name type="scientific">Priestia megaterium</name>
    <name type="common">Bacillus megaterium</name>
    <dbReference type="NCBI Taxonomy" id="1404"/>
    <lineage>
        <taxon>Bacteria</taxon>
        <taxon>Bacillati</taxon>
        <taxon>Bacillota</taxon>
        <taxon>Bacilli</taxon>
        <taxon>Bacillales</taxon>
        <taxon>Bacillaceae</taxon>
        <taxon>Priestia</taxon>
    </lineage>
</organism>
<reference key="1">
    <citation type="journal article" date="1992" name="Biochimie">
        <title>Cloning and sequencing of the Bacillus megaterium spoIIA operon.</title>
        <authorList>
            <person name="Tao Y.P."/>
            <person name="Hudspeth D.S.S."/>
            <person name="Vary P.S."/>
        </authorList>
    </citation>
    <scope>NUCLEOTIDE SEQUENCE [GENOMIC DNA]</scope>
</reference>
<keyword id="KW-0597">Phosphoprotein</keyword>
<keyword id="KW-0749">Sporulation</keyword>
<name>SP2AA_PRIMG</name>
<proteinExistence type="inferred from homology"/>